<proteinExistence type="evidence at protein level"/>
<keyword id="KW-0009">Actin-binding</keyword>
<keyword id="KW-0020">Allergen</keyword>
<keyword id="KW-0963">Cytoplasm</keyword>
<keyword id="KW-0206">Cytoskeleton</keyword>
<keyword id="KW-1015">Disulfide bond</keyword>
<keyword id="KW-0597">Phosphoprotein</keyword>
<dbReference type="EMBL" id="DQ138363">
    <property type="protein sequence ID" value="AAZ30441.1"/>
    <property type="molecule type" value="mRNA"/>
</dbReference>
<dbReference type="SMR" id="A4GDU5"/>
<dbReference type="Allergome" id="490">
    <property type="allergen name" value="Ole e 2"/>
</dbReference>
<dbReference type="GO" id="GO:0005938">
    <property type="term" value="C:cell cortex"/>
    <property type="evidence" value="ECO:0007669"/>
    <property type="project" value="TreeGrafter"/>
</dbReference>
<dbReference type="GO" id="GO:0005856">
    <property type="term" value="C:cytoskeleton"/>
    <property type="evidence" value="ECO:0007669"/>
    <property type="project" value="UniProtKB-SubCell"/>
</dbReference>
<dbReference type="GO" id="GO:0003785">
    <property type="term" value="F:actin monomer binding"/>
    <property type="evidence" value="ECO:0007669"/>
    <property type="project" value="TreeGrafter"/>
</dbReference>
<dbReference type="CDD" id="cd00148">
    <property type="entry name" value="PROF"/>
    <property type="match status" value="1"/>
</dbReference>
<dbReference type="FunFam" id="3.30.450.30:FF:000001">
    <property type="entry name" value="Profilin"/>
    <property type="match status" value="1"/>
</dbReference>
<dbReference type="Gene3D" id="3.30.450.30">
    <property type="entry name" value="Dynein light chain 2a, cytoplasmic"/>
    <property type="match status" value="1"/>
</dbReference>
<dbReference type="InterPro" id="IPR048278">
    <property type="entry name" value="PFN"/>
</dbReference>
<dbReference type="InterPro" id="IPR005455">
    <property type="entry name" value="PFN_euk"/>
</dbReference>
<dbReference type="InterPro" id="IPR036140">
    <property type="entry name" value="PFN_sf"/>
</dbReference>
<dbReference type="InterPro" id="IPR027310">
    <property type="entry name" value="Profilin_CS"/>
</dbReference>
<dbReference type="PANTHER" id="PTHR11604">
    <property type="entry name" value="PROFILIN"/>
    <property type="match status" value="1"/>
</dbReference>
<dbReference type="PANTHER" id="PTHR11604:SF25">
    <property type="entry name" value="PROFILIN-5"/>
    <property type="match status" value="1"/>
</dbReference>
<dbReference type="Pfam" id="PF00235">
    <property type="entry name" value="Profilin"/>
    <property type="match status" value="1"/>
</dbReference>
<dbReference type="PRINTS" id="PR00392">
    <property type="entry name" value="PROFILIN"/>
</dbReference>
<dbReference type="PRINTS" id="PR01640">
    <property type="entry name" value="PROFILINPLNT"/>
</dbReference>
<dbReference type="SMART" id="SM00392">
    <property type="entry name" value="PROF"/>
    <property type="match status" value="1"/>
</dbReference>
<dbReference type="SUPFAM" id="SSF55770">
    <property type="entry name" value="Profilin (actin-binding protein)"/>
    <property type="match status" value="1"/>
</dbReference>
<dbReference type="PROSITE" id="PS00414">
    <property type="entry name" value="PROFILIN"/>
    <property type="match status" value="1"/>
</dbReference>
<comment type="function">
    <text evidence="1">Binds to actin and affects the structure of the cytoskeleton. At high concentrations, profilin prevents the polymerization of actin, whereas it enhances it at low concentrations (By similarity).</text>
</comment>
<comment type="subunit">
    <text evidence="1">Occurs in many kinds of cells as a complex with monomeric actin in a 1:1 ratio.</text>
</comment>
<comment type="subcellular location">
    <subcellularLocation>
        <location evidence="1">Cytoplasm</location>
        <location evidence="1">Cytoskeleton</location>
    </subcellularLocation>
</comment>
<comment type="PTM">
    <text evidence="1">Phosphorylated by MAP kinases.</text>
</comment>
<comment type="polymorphism">
    <text>Several isoforms of the allergen exist due to polymorphism.</text>
</comment>
<comment type="allergen">
    <text>Causes an allergic reaction in human.</text>
</comment>
<comment type="miscellaneous">
    <text evidence="3">The variability of the residues taking part of IgE-binding epitopes might be responsible of the difference in cross-reactivity among olive pollen cultivars, and between distantly related pollen species, leading to a variable range of allergy reactions among atopic patients.</text>
</comment>
<comment type="similarity">
    <text evidence="2">Belongs to the profilin family.</text>
</comment>
<sequence>MSWQTYVDDHLMCDIEGHEGHRLTAAAIVGQDGSVWAQSATFPQFKPEEMNGIMTDFNEPGHLAPTGLHLGGTKYMVIQGEAGAVIRGKKGSGGITIKKTGQALVFGIYEEPVTPGQCNMVVERLGDYLLEQGL</sequence>
<reference key="1">
    <citation type="journal article" date="2012" name="PLoS ONE">
        <title>Characterization of profilin polymorphism in pollen with a focus on multifunctionality.</title>
        <authorList>
            <person name="Jimenez-Lopez J.C."/>
            <person name="Morales S."/>
            <person name="Castro A.J."/>
            <person name="Volkmann D."/>
            <person name="Rodriguez-Garcia M.I."/>
            <person name="Alche Jde D."/>
        </authorList>
    </citation>
    <scope>NUCLEOTIDE SEQUENCE [MRNA]</scope>
    <scope>POLYMORPHISM</scope>
    <source>
        <strain>cv. Lucio</strain>
    </source>
</reference>
<reference key="2">
    <citation type="journal article" date="2013" name="PLoS ONE">
        <title>Analysis of the effects of polymorphism on pollen profilin structural functionality and the generation of conformational, T- and B-cell epitopes.</title>
        <authorList>
            <person name="Jimenez-Lopez J.C."/>
            <person name="Rodriguez-Garcia M.I."/>
            <person name="Alche J.D."/>
        </authorList>
    </citation>
    <scope>3D-STRUCTURE MODELING</scope>
    <scope>DISULFIDE BOND</scope>
</reference>
<feature type="initiator methionine" description="Removed" evidence="1">
    <location>
        <position position="1"/>
    </location>
</feature>
<feature type="chain" id="PRO_0000425030" description="Profilin-2">
    <location>
        <begin position="2"/>
        <end position="134"/>
    </location>
</feature>
<feature type="short sequence motif" description="Involved in PIP2 interaction">
    <location>
        <begin position="84"/>
        <end position="100"/>
    </location>
</feature>
<feature type="modified residue" description="Phosphothreonine" evidence="1">
    <location>
        <position position="114"/>
    </location>
</feature>
<feature type="disulfide bond" evidence="3">
    <location>
        <begin position="13"/>
        <end position="118"/>
    </location>
</feature>
<name>PROBM_OLEEU</name>
<accession>A4GDU5</accession>
<evidence type="ECO:0000250" key="1"/>
<evidence type="ECO:0000305" key="2"/>
<evidence type="ECO:0000305" key="3">
    <source>
    </source>
</evidence>
<protein>
    <recommendedName>
        <fullName>Profilin-2</fullName>
    </recommendedName>
    <alternativeName>
        <fullName>Pollen allergen Ole e 2</fullName>
    </alternativeName>
    <allergenName>Ole e 2</allergenName>
</protein>
<organism>
    <name type="scientific">Olea europaea</name>
    <name type="common">Common olive</name>
    <dbReference type="NCBI Taxonomy" id="4146"/>
    <lineage>
        <taxon>Eukaryota</taxon>
        <taxon>Viridiplantae</taxon>
        <taxon>Streptophyta</taxon>
        <taxon>Embryophyta</taxon>
        <taxon>Tracheophyta</taxon>
        <taxon>Spermatophyta</taxon>
        <taxon>Magnoliopsida</taxon>
        <taxon>eudicotyledons</taxon>
        <taxon>Gunneridae</taxon>
        <taxon>Pentapetalae</taxon>
        <taxon>asterids</taxon>
        <taxon>lamiids</taxon>
        <taxon>Lamiales</taxon>
        <taxon>Oleaceae</taxon>
        <taxon>Oleeae</taxon>
        <taxon>Olea</taxon>
    </lineage>
</organism>